<dbReference type="EC" id="1.3.3.3" evidence="1"/>
<dbReference type="EMBL" id="BA000021">
    <property type="protein sequence ID" value="BAC24730.1"/>
    <property type="molecule type" value="Genomic_DNA"/>
</dbReference>
<dbReference type="SMR" id="Q8D1X2"/>
<dbReference type="STRING" id="36870.gene:10369093"/>
<dbReference type="KEGG" id="wbr:hemF"/>
<dbReference type="eggNOG" id="COG0408">
    <property type="taxonomic scope" value="Bacteria"/>
</dbReference>
<dbReference type="HOGENOM" id="CLU_026169_0_1_6"/>
<dbReference type="OrthoDB" id="9777553at2"/>
<dbReference type="UniPathway" id="UPA00251">
    <property type="reaction ID" value="UER00322"/>
</dbReference>
<dbReference type="Proteomes" id="UP000000562">
    <property type="component" value="Chromosome"/>
</dbReference>
<dbReference type="GO" id="GO:0005737">
    <property type="term" value="C:cytoplasm"/>
    <property type="evidence" value="ECO:0007669"/>
    <property type="project" value="UniProtKB-SubCell"/>
</dbReference>
<dbReference type="GO" id="GO:0004109">
    <property type="term" value="F:coproporphyrinogen oxidase activity"/>
    <property type="evidence" value="ECO:0007669"/>
    <property type="project" value="UniProtKB-UniRule"/>
</dbReference>
<dbReference type="GO" id="GO:0046872">
    <property type="term" value="F:metal ion binding"/>
    <property type="evidence" value="ECO:0007669"/>
    <property type="project" value="UniProtKB-KW"/>
</dbReference>
<dbReference type="GO" id="GO:0042803">
    <property type="term" value="F:protein homodimerization activity"/>
    <property type="evidence" value="ECO:0000250"/>
    <property type="project" value="UniProtKB"/>
</dbReference>
<dbReference type="GO" id="GO:0006782">
    <property type="term" value="P:protoporphyrinogen IX biosynthetic process"/>
    <property type="evidence" value="ECO:0007669"/>
    <property type="project" value="UniProtKB-UniRule"/>
</dbReference>
<dbReference type="FunFam" id="3.40.1500.10:FF:000013">
    <property type="entry name" value="Oxygen-dependent coproporphyrinogen-III oxidase"/>
    <property type="match status" value="1"/>
</dbReference>
<dbReference type="Gene3D" id="3.40.1500.10">
    <property type="entry name" value="Coproporphyrinogen III oxidase, aerobic"/>
    <property type="match status" value="1"/>
</dbReference>
<dbReference type="HAMAP" id="MF_00333">
    <property type="entry name" value="Coprogen_oxidas"/>
    <property type="match status" value="1"/>
</dbReference>
<dbReference type="InterPro" id="IPR001260">
    <property type="entry name" value="Coprogen_oxidase_aer"/>
</dbReference>
<dbReference type="InterPro" id="IPR036406">
    <property type="entry name" value="Coprogen_oxidase_aer_sf"/>
</dbReference>
<dbReference type="InterPro" id="IPR018375">
    <property type="entry name" value="Coprogen_oxidase_CS"/>
</dbReference>
<dbReference type="NCBIfam" id="NF003727">
    <property type="entry name" value="PRK05330.1"/>
    <property type="match status" value="1"/>
</dbReference>
<dbReference type="PANTHER" id="PTHR10755">
    <property type="entry name" value="COPROPORPHYRINOGEN III OXIDASE, MITOCHONDRIAL"/>
    <property type="match status" value="1"/>
</dbReference>
<dbReference type="PANTHER" id="PTHR10755:SF0">
    <property type="entry name" value="OXYGEN-DEPENDENT COPROPORPHYRINOGEN-III OXIDASE, MITOCHONDRIAL"/>
    <property type="match status" value="1"/>
</dbReference>
<dbReference type="Pfam" id="PF01218">
    <property type="entry name" value="Coprogen_oxidas"/>
    <property type="match status" value="1"/>
</dbReference>
<dbReference type="PIRSF" id="PIRSF000166">
    <property type="entry name" value="Coproporphyri_ox"/>
    <property type="match status" value="1"/>
</dbReference>
<dbReference type="PRINTS" id="PR00073">
    <property type="entry name" value="COPRGNOXDASE"/>
</dbReference>
<dbReference type="SUPFAM" id="SSF102886">
    <property type="entry name" value="Coproporphyrinogen III oxidase"/>
    <property type="match status" value="1"/>
</dbReference>
<dbReference type="PROSITE" id="PS01021">
    <property type="entry name" value="COPROGEN_OXIDASE"/>
    <property type="match status" value="1"/>
</dbReference>
<accession>Q8D1X2</accession>
<keyword id="KW-0963">Cytoplasm</keyword>
<keyword id="KW-0350">Heme biosynthesis</keyword>
<keyword id="KW-0479">Metal-binding</keyword>
<keyword id="KW-0560">Oxidoreductase</keyword>
<keyword id="KW-0627">Porphyrin biosynthesis</keyword>
<keyword id="KW-1185">Reference proteome</keyword>
<proteinExistence type="inferred from homology"/>
<organism>
    <name type="scientific">Wigglesworthia glossinidia brevipalpis</name>
    <dbReference type="NCBI Taxonomy" id="36870"/>
    <lineage>
        <taxon>Bacteria</taxon>
        <taxon>Pseudomonadati</taxon>
        <taxon>Pseudomonadota</taxon>
        <taxon>Gammaproteobacteria</taxon>
        <taxon>Enterobacterales</taxon>
        <taxon>Erwiniaceae</taxon>
        <taxon>Wigglesworthia</taxon>
    </lineage>
</organism>
<evidence type="ECO:0000255" key="1">
    <source>
        <dbReference type="HAMAP-Rule" id="MF_00333"/>
    </source>
</evidence>
<comment type="function">
    <text evidence="1">Involved in the heme biosynthesis. Catalyzes the aerobic oxidative decarboxylation of propionate groups of rings A and B of coproporphyrinogen-III to yield the vinyl groups in protoporphyrinogen-IX.</text>
</comment>
<comment type="catalytic activity">
    <reaction evidence="1">
        <text>coproporphyrinogen III + O2 + 2 H(+) = protoporphyrinogen IX + 2 CO2 + 2 H2O</text>
        <dbReference type="Rhea" id="RHEA:18257"/>
        <dbReference type="ChEBI" id="CHEBI:15377"/>
        <dbReference type="ChEBI" id="CHEBI:15378"/>
        <dbReference type="ChEBI" id="CHEBI:15379"/>
        <dbReference type="ChEBI" id="CHEBI:16526"/>
        <dbReference type="ChEBI" id="CHEBI:57307"/>
        <dbReference type="ChEBI" id="CHEBI:57309"/>
        <dbReference type="EC" id="1.3.3.3"/>
    </reaction>
</comment>
<comment type="cofactor">
    <cofactor evidence="1">
        <name>a divalent metal cation</name>
        <dbReference type="ChEBI" id="CHEBI:60240"/>
    </cofactor>
</comment>
<comment type="pathway">
    <text evidence="1">Porphyrin-containing compound metabolism; protoporphyrin-IX biosynthesis; protoporphyrinogen-IX from coproporphyrinogen-III (O2 route): step 1/1.</text>
</comment>
<comment type="subunit">
    <text evidence="1">Homodimer.</text>
</comment>
<comment type="subcellular location">
    <subcellularLocation>
        <location evidence="1">Cytoplasm</location>
    </subcellularLocation>
</comment>
<comment type="similarity">
    <text evidence="1">Belongs to the aerobic coproporphyrinogen-III oxidase family.</text>
</comment>
<name>HEM6_WIGBR</name>
<gene>
    <name evidence="1" type="primary">hemF</name>
    <name type="ordered locus">WIGBR5840</name>
</gene>
<sequence>MTIIKQEKTLFFFKNLQNIICNTFSKIDGKSLFKEDMWNTKKGYGRTRILKKGKVFEQVSVNFSHVFGKSLPKSSSNKKRDLENCSYQASGISVVSHPKNPYVPTSHLNIRFFLAKNKKRKTIWWFGGGFDLTPYYGFYQDVIHWHTIAKKICQPFGDDIYFKYKKWCDDYFFIKHRNESRGIGGLFFDDLCLPDFHSAFLFSKSIGKGYIDAYFPIVNLRKSYSWGSRERNFQLYRRGRYVEFNLLLDRGTLFGIQSNGRIESILSSMPPLVKWEYGWHPKPNSPESKLYTDFLPIKDWIDK</sequence>
<reference key="1">
    <citation type="journal article" date="2002" name="Nat. Genet.">
        <title>Genome sequence of the endocellular obligate symbiont of tsetse flies, Wigglesworthia glossinidia.</title>
        <authorList>
            <person name="Akman L."/>
            <person name="Yamashita A."/>
            <person name="Watanabe H."/>
            <person name="Oshima K."/>
            <person name="Shiba T."/>
            <person name="Hattori M."/>
            <person name="Aksoy S."/>
        </authorList>
    </citation>
    <scope>NUCLEOTIDE SEQUENCE [LARGE SCALE GENOMIC DNA]</scope>
</reference>
<feature type="chain" id="PRO_0000109930" description="Oxygen-dependent coproporphyrinogen-III oxidase">
    <location>
        <begin position="1"/>
        <end position="303"/>
    </location>
</feature>
<feature type="region of interest" description="Important for dimerization" evidence="1">
    <location>
        <begin position="241"/>
        <end position="276"/>
    </location>
</feature>
<feature type="active site" description="Proton donor" evidence="1">
    <location>
        <position position="107"/>
    </location>
</feature>
<feature type="binding site" evidence="1">
    <location>
        <position position="93"/>
    </location>
    <ligand>
        <name>substrate</name>
    </ligand>
</feature>
<feature type="binding site" evidence="1">
    <location>
        <position position="97"/>
    </location>
    <ligand>
        <name>a divalent metal cation</name>
        <dbReference type="ChEBI" id="CHEBI:60240"/>
    </ligand>
</feature>
<feature type="binding site" evidence="1">
    <location>
        <position position="107"/>
    </location>
    <ligand>
        <name>a divalent metal cation</name>
        <dbReference type="ChEBI" id="CHEBI:60240"/>
    </ligand>
</feature>
<feature type="binding site" evidence="1">
    <location>
        <begin position="109"/>
        <end position="111"/>
    </location>
    <ligand>
        <name>substrate</name>
    </ligand>
</feature>
<feature type="binding site" evidence="1">
    <location>
        <position position="146"/>
    </location>
    <ligand>
        <name>a divalent metal cation</name>
        <dbReference type="ChEBI" id="CHEBI:60240"/>
    </ligand>
</feature>
<feature type="binding site" evidence="1">
    <location>
        <position position="176"/>
    </location>
    <ligand>
        <name>a divalent metal cation</name>
        <dbReference type="ChEBI" id="CHEBI:60240"/>
    </ligand>
</feature>
<feature type="site" description="Important for dimerization" evidence="1">
    <location>
        <position position="176"/>
    </location>
</feature>
<protein>
    <recommendedName>
        <fullName evidence="1">Oxygen-dependent coproporphyrinogen-III oxidase</fullName>
        <shortName evidence="1">CPO</shortName>
        <shortName evidence="1">Coprogen oxidase</shortName>
        <shortName evidence="1">Coproporphyrinogenase</shortName>
        <ecNumber evidence="1">1.3.3.3</ecNumber>
    </recommendedName>
</protein>